<reference key="1">
    <citation type="journal article" date="1996" name="FEMS Microbiol. Lett.">
        <title>Identification and characterization of the pqqDGC gene cluster involved in pyrroloquinoline quinone production in an obligate methylotroph Methylobacillus flagellatum.</title>
        <authorList>
            <person name="Gomelsky M."/>
            <person name="Biville F."/>
            <person name="Gasser F."/>
            <person name="Tsygankov Y.D."/>
        </authorList>
    </citation>
    <scope>NUCLEOTIDE SEQUENCE [GENOMIC DNA]</scope>
</reference>
<name>PQQA_METFL</name>
<evidence type="ECO:0000250" key="1"/>
<evidence type="ECO:0000305" key="2"/>
<sequence length="24" mass="2987">MMWTKPEVTEMRFGFEVTMYVCNR</sequence>
<proteinExistence type="inferred from homology"/>
<dbReference type="EMBL" id="L78064">
    <property type="protein sequence ID" value="AAB42379.1"/>
    <property type="molecule type" value="Genomic_DNA"/>
</dbReference>
<dbReference type="UniPathway" id="UPA00539"/>
<dbReference type="GO" id="GO:0018189">
    <property type="term" value="P:pyrroloquinoline quinone biosynthetic process"/>
    <property type="evidence" value="ECO:0007669"/>
    <property type="project" value="UniProtKB-UniRule"/>
</dbReference>
<dbReference type="HAMAP" id="MF_00656">
    <property type="entry name" value="PQQ_syn_PqqA"/>
    <property type="match status" value="1"/>
</dbReference>
<dbReference type="InterPro" id="IPR011725">
    <property type="entry name" value="PQQ_synth_PqqA"/>
</dbReference>
<dbReference type="NCBIfam" id="TIGR02107">
    <property type="entry name" value="PQQ_syn_pqqA"/>
    <property type="match status" value="1"/>
</dbReference>
<dbReference type="Pfam" id="PF08042">
    <property type="entry name" value="PqqA"/>
    <property type="match status" value="1"/>
</dbReference>
<keyword id="KW-0884">PQQ biosynthesis</keyword>
<protein>
    <recommendedName>
        <fullName>Coenzyme PQQ synthesis protein A</fullName>
    </recommendedName>
    <alternativeName>
        <fullName>Coenzyme PQQ synthesis protein D</fullName>
    </alternativeName>
    <alternativeName>
        <fullName>Pyrroloquinoline quinone biosynthesis protein A</fullName>
    </alternativeName>
</protein>
<comment type="function">
    <text evidence="1">Required for coenzyme pyrroloquinoline quinone (PQQ) biosynthesis. PQQ is probably formed by cross-linking a specific glutamate to a specific tyrosine residue and excising these residues from the peptide (By similarity).</text>
</comment>
<comment type="pathway">
    <text>Cofactor biosynthesis; pyrroloquinoline quinone biosynthesis.</text>
</comment>
<comment type="similarity">
    <text evidence="2">Belongs to the PqqA family.</text>
</comment>
<accession>Q50436</accession>
<organism>
    <name type="scientific">Methylobacillus flagellatus</name>
    <dbReference type="NCBI Taxonomy" id="405"/>
    <lineage>
        <taxon>Bacteria</taxon>
        <taxon>Pseudomonadati</taxon>
        <taxon>Pseudomonadota</taxon>
        <taxon>Betaproteobacteria</taxon>
        <taxon>Nitrosomonadales</taxon>
        <taxon>Methylophilaceae</taxon>
        <taxon>Methylobacillus</taxon>
    </lineage>
</organism>
<gene>
    <name type="primary">pqqA</name>
    <name type="synonym">pqqD</name>
</gene>
<feature type="chain" id="PRO_0000220312" description="Coenzyme PQQ synthesis protein A">
    <location>
        <begin position="1"/>
        <end position="24"/>
    </location>
</feature>
<feature type="cross-link" description="Pyrroloquinoline quinone (Glu-Tyr)" evidence="1">
    <location>
        <begin position="16"/>
        <end position="20"/>
    </location>
</feature>